<organism>
    <name type="scientific">Drosophila melanogaster</name>
    <name type="common">Fruit fly</name>
    <dbReference type="NCBI Taxonomy" id="7227"/>
    <lineage>
        <taxon>Eukaryota</taxon>
        <taxon>Metazoa</taxon>
        <taxon>Ecdysozoa</taxon>
        <taxon>Arthropoda</taxon>
        <taxon>Hexapoda</taxon>
        <taxon>Insecta</taxon>
        <taxon>Pterygota</taxon>
        <taxon>Neoptera</taxon>
        <taxon>Endopterygota</taxon>
        <taxon>Diptera</taxon>
        <taxon>Brachycera</taxon>
        <taxon>Muscomorpha</taxon>
        <taxon>Ephydroidea</taxon>
        <taxon>Drosophilidae</taxon>
        <taxon>Drosophila</taxon>
        <taxon>Sophophora</taxon>
    </lineage>
</organism>
<gene>
    <name type="ORF">CG7990</name>
</gene>
<dbReference type="EMBL" id="AE014298">
    <property type="protein sequence ID" value="AAN09483.1"/>
    <property type="molecule type" value="Genomic_DNA"/>
</dbReference>
<dbReference type="EMBL" id="BT031012">
    <property type="protein sequence ID" value="ABV82394.1"/>
    <property type="molecule type" value="mRNA"/>
</dbReference>
<dbReference type="EMBL" id="BT031025">
    <property type="protein sequence ID" value="ABV82407.1"/>
    <property type="molecule type" value="mRNA"/>
</dbReference>
<dbReference type="RefSeq" id="NP_573361.1">
    <property type="nucleotide sequence ID" value="NM_133133.2"/>
</dbReference>
<dbReference type="FunCoup" id="Q9VWK6">
    <property type="interactions" value="30"/>
</dbReference>
<dbReference type="STRING" id="7227.FBpp0074464"/>
<dbReference type="PaxDb" id="7227-FBpp0074464"/>
<dbReference type="DNASU" id="32909"/>
<dbReference type="EnsemblMetazoa" id="FBtr0074695">
    <property type="protein sequence ID" value="FBpp0074464"/>
    <property type="gene ID" value="FBgn0030997"/>
</dbReference>
<dbReference type="GeneID" id="32909"/>
<dbReference type="KEGG" id="dme:Dmel_CG7990"/>
<dbReference type="UCSC" id="CG7990-RA">
    <property type="organism name" value="d. melanogaster"/>
</dbReference>
<dbReference type="AGR" id="FB:FBgn0030997"/>
<dbReference type="FlyBase" id="FBgn0030997">
    <property type="gene designation" value="CG7990"/>
</dbReference>
<dbReference type="VEuPathDB" id="VectorBase:FBgn0030997"/>
<dbReference type="eggNOG" id="KOG3979">
    <property type="taxonomic scope" value="Eukaryota"/>
</dbReference>
<dbReference type="GeneTree" id="ENSGT00510000047299"/>
<dbReference type="HOGENOM" id="CLU_061191_0_0_1"/>
<dbReference type="InParanoid" id="Q9VWK6"/>
<dbReference type="OMA" id="CFATSML"/>
<dbReference type="OrthoDB" id="68581at2759"/>
<dbReference type="PhylomeDB" id="Q9VWK6"/>
<dbReference type="BioGRID-ORCS" id="32909">
    <property type="hits" value="0 hits in 1 CRISPR screen"/>
</dbReference>
<dbReference type="ChiTaRS" id="CG7990">
    <property type="organism name" value="fly"/>
</dbReference>
<dbReference type="GenomeRNAi" id="32909"/>
<dbReference type="PRO" id="PR:Q9VWK6"/>
<dbReference type="Proteomes" id="UP000000803">
    <property type="component" value="Chromosome X"/>
</dbReference>
<dbReference type="Bgee" id="FBgn0030997">
    <property type="expression patterns" value="Expressed in distal medullary amacrine neuron Dm11 in insect head and 179 other cell types or tissues"/>
</dbReference>
<dbReference type="ExpressionAtlas" id="Q9VWK6">
    <property type="expression patterns" value="baseline and differential"/>
</dbReference>
<dbReference type="GO" id="GO:0005789">
    <property type="term" value="C:endoplasmic reticulum membrane"/>
    <property type="evidence" value="ECO:0000318"/>
    <property type="project" value="GO_Central"/>
</dbReference>
<dbReference type="GO" id="GO:0000139">
    <property type="term" value="C:Golgi membrane"/>
    <property type="evidence" value="ECO:0007669"/>
    <property type="project" value="InterPro"/>
</dbReference>
<dbReference type="GO" id="GO:0006506">
    <property type="term" value="P:GPI anchor biosynthetic process"/>
    <property type="evidence" value="ECO:0000318"/>
    <property type="project" value="GO_Central"/>
</dbReference>
<dbReference type="InterPro" id="IPR019402">
    <property type="entry name" value="Frag1/DRAM/Sfk1"/>
</dbReference>
<dbReference type="InterPro" id="IPR039545">
    <property type="entry name" value="PGAP2"/>
</dbReference>
<dbReference type="PANTHER" id="PTHR12892">
    <property type="entry name" value="FGF RECEPTOR ACTIVATING PROTEIN 1"/>
    <property type="match status" value="1"/>
</dbReference>
<dbReference type="PANTHER" id="PTHR12892:SF17">
    <property type="entry name" value="POST-GPI ATTACHMENT TO PROTEINS FACTOR 2-LIKE"/>
    <property type="match status" value="1"/>
</dbReference>
<dbReference type="Pfam" id="PF10277">
    <property type="entry name" value="Frag1"/>
    <property type="match status" value="1"/>
</dbReference>
<keyword id="KW-0472">Membrane</keyword>
<keyword id="KW-1185">Reference proteome</keyword>
<keyword id="KW-0812">Transmembrane</keyword>
<keyword id="KW-1133">Transmembrane helix</keyword>
<comment type="subcellular location">
    <subcellularLocation>
        <location evidence="2">Membrane</location>
        <topology evidence="2">Multi-pass membrane protein</topology>
    </subcellularLocation>
</comment>
<comment type="similarity">
    <text evidence="2">Belongs to the PGAP2 family.</text>
</comment>
<sequence length="325" mass="36144">MQQSTGAATSSAADSGMGATDLVSRCVGDGGGGGGNSCSGGSSDPAAINTTISSKQADAREPQEQQVAIHYLASFHELCVVTALLPLVTLFTCFVTAYVFQYDDVHETHCRVYNIIPSISAITGVSPQRYFWRFSIALHIGPRIPIAFVYKNYYRSQLRRISPAQVPQTSLLITLILVLNCIEIASLGGVTYISNRENYPVHERIFITFMVCSLCYMLATIKLNGILNAGQALSEKQLLSIKWKKILFAVSILSTVGLLVFFAKHRFYCHDLAFSWFAFFEYLIAIANMLFHFTIIWDFPSQFMMIVQGPRENLAQYLSNRPKLD</sequence>
<name>PGP2L_DROME</name>
<accession>Q9VWK6</accession>
<accession>A8E770</accession>
<accession>Q8IQX1</accession>
<proteinExistence type="evidence at transcript level"/>
<reference key="1">
    <citation type="journal article" date="2000" name="Science">
        <title>The genome sequence of Drosophila melanogaster.</title>
        <authorList>
            <person name="Adams M.D."/>
            <person name="Celniker S.E."/>
            <person name="Holt R.A."/>
            <person name="Evans C.A."/>
            <person name="Gocayne J.D."/>
            <person name="Amanatides P.G."/>
            <person name="Scherer S.E."/>
            <person name="Li P.W."/>
            <person name="Hoskins R.A."/>
            <person name="Galle R.F."/>
            <person name="George R.A."/>
            <person name="Lewis S.E."/>
            <person name="Richards S."/>
            <person name="Ashburner M."/>
            <person name="Henderson S.N."/>
            <person name="Sutton G.G."/>
            <person name="Wortman J.R."/>
            <person name="Yandell M.D."/>
            <person name="Zhang Q."/>
            <person name="Chen L.X."/>
            <person name="Brandon R.C."/>
            <person name="Rogers Y.-H.C."/>
            <person name="Blazej R.G."/>
            <person name="Champe M."/>
            <person name="Pfeiffer B.D."/>
            <person name="Wan K.H."/>
            <person name="Doyle C."/>
            <person name="Baxter E.G."/>
            <person name="Helt G."/>
            <person name="Nelson C.R."/>
            <person name="Miklos G.L.G."/>
            <person name="Abril J.F."/>
            <person name="Agbayani A."/>
            <person name="An H.-J."/>
            <person name="Andrews-Pfannkoch C."/>
            <person name="Baldwin D."/>
            <person name="Ballew R.M."/>
            <person name="Basu A."/>
            <person name="Baxendale J."/>
            <person name="Bayraktaroglu L."/>
            <person name="Beasley E.M."/>
            <person name="Beeson K.Y."/>
            <person name="Benos P.V."/>
            <person name="Berman B.P."/>
            <person name="Bhandari D."/>
            <person name="Bolshakov S."/>
            <person name="Borkova D."/>
            <person name="Botchan M.R."/>
            <person name="Bouck J."/>
            <person name="Brokstein P."/>
            <person name="Brottier P."/>
            <person name="Burtis K.C."/>
            <person name="Busam D.A."/>
            <person name="Butler H."/>
            <person name="Cadieu E."/>
            <person name="Center A."/>
            <person name="Chandra I."/>
            <person name="Cherry J.M."/>
            <person name="Cawley S."/>
            <person name="Dahlke C."/>
            <person name="Davenport L.B."/>
            <person name="Davies P."/>
            <person name="de Pablos B."/>
            <person name="Delcher A."/>
            <person name="Deng Z."/>
            <person name="Mays A.D."/>
            <person name="Dew I."/>
            <person name="Dietz S.M."/>
            <person name="Dodson K."/>
            <person name="Doup L.E."/>
            <person name="Downes M."/>
            <person name="Dugan-Rocha S."/>
            <person name="Dunkov B.C."/>
            <person name="Dunn P."/>
            <person name="Durbin K.J."/>
            <person name="Evangelista C.C."/>
            <person name="Ferraz C."/>
            <person name="Ferriera S."/>
            <person name="Fleischmann W."/>
            <person name="Fosler C."/>
            <person name="Gabrielian A.E."/>
            <person name="Garg N.S."/>
            <person name="Gelbart W.M."/>
            <person name="Glasser K."/>
            <person name="Glodek A."/>
            <person name="Gong F."/>
            <person name="Gorrell J.H."/>
            <person name="Gu Z."/>
            <person name="Guan P."/>
            <person name="Harris M."/>
            <person name="Harris N.L."/>
            <person name="Harvey D.A."/>
            <person name="Heiman T.J."/>
            <person name="Hernandez J.R."/>
            <person name="Houck J."/>
            <person name="Hostin D."/>
            <person name="Houston K.A."/>
            <person name="Howland T.J."/>
            <person name="Wei M.-H."/>
            <person name="Ibegwam C."/>
            <person name="Jalali M."/>
            <person name="Kalush F."/>
            <person name="Karpen G.H."/>
            <person name="Ke Z."/>
            <person name="Kennison J.A."/>
            <person name="Ketchum K.A."/>
            <person name="Kimmel B.E."/>
            <person name="Kodira C.D."/>
            <person name="Kraft C.L."/>
            <person name="Kravitz S."/>
            <person name="Kulp D."/>
            <person name="Lai Z."/>
            <person name="Lasko P."/>
            <person name="Lei Y."/>
            <person name="Levitsky A.A."/>
            <person name="Li J.H."/>
            <person name="Li Z."/>
            <person name="Liang Y."/>
            <person name="Lin X."/>
            <person name="Liu X."/>
            <person name="Mattei B."/>
            <person name="McIntosh T.C."/>
            <person name="McLeod M.P."/>
            <person name="McPherson D."/>
            <person name="Merkulov G."/>
            <person name="Milshina N.V."/>
            <person name="Mobarry C."/>
            <person name="Morris J."/>
            <person name="Moshrefi A."/>
            <person name="Mount S.M."/>
            <person name="Moy M."/>
            <person name="Murphy B."/>
            <person name="Murphy L."/>
            <person name="Muzny D.M."/>
            <person name="Nelson D.L."/>
            <person name="Nelson D.R."/>
            <person name="Nelson K.A."/>
            <person name="Nixon K."/>
            <person name="Nusskern D.R."/>
            <person name="Pacleb J.M."/>
            <person name="Palazzolo M."/>
            <person name="Pittman G.S."/>
            <person name="Pan S."/>
            <person name="Pollard J."/>
            <person name="Puri V."/>
            <person name="Reese M.G."/>
            <person name="Reinert K."/>
            <person name="Remington K."/>
            <person name="Saunders R.D.C."/>
            <person name="Scheeler F."/>
            <person name="Shen H."/>
            <person name="Shue B.C."/>
            <person name="Siden-Kiamos I."/>
            <person name="Simpson M."/>
            <person name="Skupski M.P."/>
            <person name="Smith T.J."/>
            <person name="Spier E."/>
            <person name="Spradling A.C."/>
            <person name="Stapleton M."/>
            <person name="Strong R."/>
            <person name="Sun E."/>
            <person name="Svirskas R."/>
            <person name="Tector C."/>
            <person name="Turner R."/>
            <person name="Venter E."/>
            <person name="Wang A.H."/>
            <person name="Wang X."/>
            <person name="Wang Z.-Y."/>
            <person name="Wassarman D.A."/>
            <person name="Weinstock G.M."/>
            <person name="Weissenbach J."/>
            <person name="Williams S.M."/>
            <person name="Woodage T."/>
            <person name="Worley K.C."/>
            <person name="Wu D."/>
            <person name="Yang S."/>
            <person name="Yao Q.A."/>
            <person name="Ye J."/>
            <person name="Yeh R.-F."/>
            <person name="Zaveri J.S."/>
            <person name="Zhan M."/>
            <person name="Zhang G."/>
            <person name="Zhao Q."/>
            <person name="Zheng L."/>
            <person name="Zheng X.H."/>
            <person name="Zhong F.N."/>
            <person name="Zhong W."/>
            <person name="Zhou X."/>
            <person name="Zhu S.C."/>
            <person name="Zhu X."/>
            <person name="Smith H.O."/>
            <person name="Gibbs R.A."/>
            <person name="Myers E.W."/>
            <person name="Rubin G.M."/>
            <person name="Venter J.C."/>
        </authorList>
    </citation>
    <scope>NUCLEOTIDE SEQUENCE [LARGE SCALE GENOMIC DNA]</scope>
    <source>
        <strain>Berkeley</strain>
    </source>
</reference>
<reference key="2">
    <citation type="journal article" date="2002" name="Genome Biol.">
        <title>Annotation of the Drosophila melanogaster euchromatic genome: a systematic review.</title>
        <authorList>
            <person name="Misra S."/>
            <person name="Crosby M.A."/>
            <person name="Mungall C.J."/>
            <person name="Matthews B.B."/>
            <person name="Campbell K.S."/>
            <person name="Hradecky P."/>
            <person name="Huang Y."/>
            <person name="Kaminker J.S."/>
            <person name="Millburn G.H."/>
            <person name="Prochnik S.E."/>
            <person name="Smith C.D."/>
            <person name="Tupy J.L."/>
            <person name="Whitfield E.J."/>
            <person name="Bayraktaroglu L."/>
            <person name="Berman B.P."/>
            <person name="Bettencourt B.R."/>
            <person name="Celniker S.E."/>
            <person name="de Grey A.D.N.J."/>
            <person name="Drysdale R.A."/>
            <person name="Harris N.L."/>
            <person name="Richter J."/>
            <person name="Russo S."/>
            <person name="Schroeder A.J."/>
            <person name="Shu S.Q."/>
            <person name="Stapleton M."/>
            <person name="Yamada C."/>
            <person name="Ashburner M."/>
            <person name="Gelbart W.M."/>
            <person name="Rubin G.M."/>
            <person name="Lewis S.E."/>
        </authorList>
    </citation>
    <scope>GENOME REANNOTATION</scope>
    <source>
        <strain>Berkeley</strain>
    </source>
</reference>
<reference key="3">
    <citation type="journal article" date="2002" name="Genome Biol.">
        <title>A Drosophila full-length cDNA resource.</title>
        <authorList>
            <person name="Stapleton M."/>
            <person name="Carlson J.W."/>
            <person name="Brokstein P."/>
            <person name="Yu C."/>
            <person name="Champe M."/>
            <person name="George R.A."/>
            <person name="Guarin H."/>
            <person name="Kronmiller B."/>
            <person name="Pacleb J.M."/>
            <person name="Park S."/>
            <person name="Wan K.H."/>
            <person name="Rubin G.M."/>
            <person name="Celniker S.E."/>
        </authorList>
    </citation>
    <scope>NUCLEOTIDE SEQUENCE [LARGE SCALE MRNA]</scope>
    <source>
        <strain>Berkeley</strain>
        <tissue>Embryo</tissue>
        <tissue>Head</tissue>
    </source>
</reference>
<protein>
    <recommendedName>
        <fullName>Post-GPI attachment to proteins factor 2-like</fullName>
    </recommendedName>
</protein>
<feature type="chain" id="PRO_0000326104" description="Post-GPI attachment to proteins factor 2-like">
    <location>
        <begin position="1"/>
        <end position="325"/>
    </location>
</feature>
<feature type="transmembrane region" description="Helical" evidence="1">
    <location>
        <begin position="80"/>
        <end position="100"/>
    </location>
</feature>
<feature type="transmembrane region" description="Helical" evidence="1">
    <location>
        <begin position="130"/>
        <end position="150"/>
    </location>
</feature>
<feature type="transmembrane region" description="Helical" evidence="1">
    <location>
        <begin position="171"/>
        <end position="191"/>
    </location>
</feature>
<feature type="transmembrane region" description="Helical" evidence="1">
    <location>
        <begin position="205"/>
        <end position="225"/>
    </location>
</feature>
<feature type="transmembrane region" description="Helical" evidence="1">
    <location>
        <begin position="243"/>
        <end position="263"/>
    </location>
</feature>
<feature type="transmembrane region" description="Helical" evidence="1">
    <location>
        <begin position="276"/>
        <end position="296"/>
    </location>
</feature>
<feature type="sequence conflict" description="In Ref. 3; ABV82394." evidence="2" ref="3">
    <original>N</original>
    <variation>K</variation>
    <location>
        <position position="288"/>
    </location>
</feature>
<evidence type="ECO:0000255" key="1"/>
<evidence type="ECO:0000305" key="2"/>